<keyword id="KW-0028">Amino-acid biosynthesis</keyword>
<keyword id="KW-0057">Aromatic amino acid biosynthesis</keyword>
<keyword id="KW-0328">Glycosyltransferase</keyword>
<keyword id="KW-0460">Magnesium</keyword>
<keyword id="KW-0479">Metal-binding</keyword>
<keyword id="KW-1185">Reference proteome</keyword>
<keyword id="KW-0808">Transferase</keyword>
<keyword id="KW-0822">Tryptophan biosynthesis</keyword>
<sequence length="341" mass="36310">MFKELLKKCLRGESLSAEEAEKIMNDIMNGKVPAAQIASVLTILTYRGETVDEIVGFVRGMKNNMNAISLEELNVVDTCGTGGDGASTFNISTASAIVASAAGVKVAKHGNRAVSSKSGSADVLEHLDIWIQGNEKEVKNAVADLNMSFLFAPLYHPAMKHVAATRKELGFRTVFNALGPLANPTNCTKQVIGVYSIELARKLAEALVVLGANHVLLVAGRDGLDEISATDVTDVVEVQGNVITEYTLAPEDVHLQRGKLEDLVVEDAKSSAELIESLFLNKSNVTAKNAVVLNSAAAIYVSGNVSTFEEGVAVALETIESGAAYTQLQRLKSKKVVEHAQ</sequence>
<accession>P70936</accession>
<accession>D5DRF3</accession>
<reference key="1">
    <citation type="journal article" date="2011" name="J. Bacteriol.">
        <title>Genome sequences of the biotechnologically important Bacillus megaterium strains QM B1551 and DSM319.</title>
        <authorList>
            <person name="Eppinger M."/>
            <person name="Bunk B."/>
            <person name="Johns M.A."/>
            <person name="Edirisinghe J.N."/>
            <person name="Kutumbaka K.K."/>
            <person name="Koenig S.S."/>
            <person name="Creasy H.H."/>
            <person name="Rosovitz M.J."/>
            <person name="Riley D.R."/>
            <person name="Daugherty S."/>
            <person name="Martin M."/>
            <person name="Elbourne L.D."/>
            <person name="Paulsen I."/>
            <person name="Biedendieck R."/>
            <person name="Braun C."/>
            <person name="Grayburn S."/>
            <person name="Dhingra S."/>
            <person name="Lukyanchuk V."/>
            <person name="Ball B."/>
            <person name="Ul-Qamar R."/>
            <person name="Seibel J."/>
            <person name="Bremer E."/>
            <person name="Jahn D."/>
            <person name="Ravel J."/>
            <person name="Vary P.S."/>
        </authorList>
    </citation>
    <scope>NUCLEOTIDE SEQUENCE [LARGE SCALE GENOMIC DNA]</scope>
    <source>
        <strain>ATCC 12872 / DSM 1804 / QMB1551</strain>
    </source>
</reference>
<reference key="2">
    <citation type="submission" date="1996-09" db="EMBL/GenBank/DDBJ databases">
        <authorList>
            <person name="Jablonski L.M."/>
            <person name="Vary P.S."/>
            <person name="Hudspeth D.S."/>
        </authorList>
    </citation>
    <scope>NUCLEOTIDE SEQUENCE [GENOMIC DNA] OF 297-341</scope>
</reference>
<feature type="chain" id="PRO_0000154427" description="Anthranilate phosphoribosyltransferase">
    <location>
        <begin position="1"/>
        <end position="341"/>
    </location>
</feature>
<feature type="binding site" evidence="1">
    <location>
        <position position="80"/>
    </location>
    <ligand>
        <name>5-phospho-alpha-D-ribose 1-diphosphate</name>
        <dbReference type="ChEBI" id="CHEBI:58017"/>
    </ligand>
</feature>
<feature type="binding site" evidence="1">
    <location>
        <position position="80"/>
    </location>
    <ligand>
        <name>anthranilate</name>
        <dbReference type="ChEBI" id="CHEBI:16567"/>
        <label>1</label>
    </ligand>
</feature>
<feature type="binding site" evidence="1">
    <location>
        <begin position="83"/>
        <end position="84"/>
    </location>
    <ligand>
        <name>5-phospho-alpha-D-ribose 1-diphosphate</name>
        <dbReference type="ChEBI" id="CHEBI:58017"/>
    </ligand>
</feature>
<feature type="binding site" evidence="1">
    <location>
        <position position="88"/>
    </location>
    <ligand>
        <name>5-phospho-alpha-D-ribose 1-diphosphate</name>
        <dbReference type="ChEBI" id="CHEBI:58017"/>
    </ligand>
</feature>
<feature type="binding site" evidence="1">
    <location>
        <begin position="90"/>
        <end position="93"/>
    </location>
    <ligand>
        <name>5-phospho-alpha-D-ribose 1-diphosphate</name>
        <dbReference type="ChEBI" id="CHEBI:58017"/>
    </ligand>
</feature>
<feature type="binding site" evidence="1">
    <location>
        <position position="92"/>
    </location>
    <ligand>
        <name>Mg(2+)</name>
        <dbReference type="ChEBI" id="CHEBI:18420"/>
        <label>1</label>
    </ligand>
</feature>
<feature type="binding site" evidence="1">
    <location>
        <begin position="108"/>
        <end position="116"/>
    </location>
    <ligand>
        <name>5-phospho-alpha-D-ribose 1-diphosphate</name>
        <dbReference type="ChEBI" id="CHEBI:58017"/>
    </ligand>
</feature>
<feature type="binding site" evidence="1">
    <location>
        <position position="111"/>
    </location>
    <ligand>
        <name>anthranilate</name>
        <dbReference type="ChEBI" id="CHEBI:16567"/>
        <label>1</label>
    </ligand>
</feature>
<feature type="binding site" evidence="1">
    <location>
        <position position="120"/>
    </location>
    <ligand>
        <name>5-phospho-alpha-D-ribose 1-diphosphate</name>
        <dbReference type="ChEBI" id="CHEBI:58017"/>
    </ligand>
</feature>
<feature type="binding site" evidence="1">
    <location>
        <position position="166"/>
    </location>
    <ligand>
        <name>anthranilate</name>
        <dbReference type="ChEBI" id="CHEBI:16567"/>
        <label>2</label>
    </ligand>
</feature>
<feature type="binding site" evidence="1">
    <location>
        <position position="225"/>
    </location>
    <ligand>
        <name>Mg(2+)</name>
        <dbReference type="ChEBI" id="CHEBI:18420"/>
        <label>2</label>
    </ligand>
</feature>
<feature type="binding site" evidence="1">
    <location>
        <position position="226"/>
    </location>
    <ligand>
        <name>Mg(2+)</name>
        <dbReference type="ChEBI" id="CHEBI:18420"/>
        <label>1</label>
    </ligand>
</feature>
<feature type="binding site" evidence="1">
    <location>
        <position position="226"/>
    </location>
    <ligand>
        <name>Mg(2+)</name>
        <dbReference type="ChEBI" id="CHEBI:18420"/>
        <label>2</label>
    </ligand>
</feature>
<comment type="function">
    <text evidence="1">Catalyzes the transfer of the phosphoribosyl group of 5-phosphorylribose-1-pyrophosphate (PRPP) to anthranilate to yield N-(5'-phosphoribosyl)-anthranilate (PRA).</text>
</comment>
<comment type="catalytic activity">
    <reaction evidence="1">
        <text>N-(5-phospho-beta-D-ribosyl)anthranilate + diphosphate = 5-phospho-alpha-D-ribose 1-diphosphate + anthranilate</text>
        <dbReference type="Rhea" id="RHEA:11768"/>
        <dbReference type="ChEBI" id="CHEBI:16567"/>
        <dbReference type="ChEBI" id="CHEBI:18277"/>
        <dbReference type="ChEBI" id="CHEBI:33019"/>
        <dbReference type="ChEBI" id="CHEBI:58017"/>
        <dbReference type="EC" id="2.4.2.18"/>
    </reaction>
</comment>
<comment type="cofactor">
    <cofactor evidence="1">
        <name>Mg(2+)</name>
        <dbReference type="ChEBI" id="CHEBI:18420"/>
    </cofactor>
    <text evidence="1">Binds 2 magnesium ions per monomer.</text>
</comment>
<comment type="pathway">
    <text evidence="1">Amino-acid biosynthesis; L-tryptophan biosynthesis; L-tryptophan from chorismate: step 2/5.</text>
</comment>
<comment type="subunit">
    <text evidence="1">Homodimer.</text>
</comment>
<comment type="similarity">
    <text evidence="1">Belongs to the anthranilate phosphoribosyltransferase family.</text>
</comment>
<protein>
    <recommendedName>
        <fullName evidence="1">Anthranilate phosphoribosyltransferase</fullName>
        <ecNumber evidence="1">2.4.2.18</ecNumber>
    </recommendedName>
</protein>
<dbReference type="EC" id="2.4.2.18" evidence="1"/>
<dbReference type="EMBL" id="CP001983">
    <property type="protein sequence ID" value="ADE71332.1"/>
    <property type="molecule type" value="Genomic_DNA"/>
</dbReference>
<dbReference type="EMBL" id="U67986">
    <property type="protein sequence ID" value="AAB07591.1"/>
    <property type="molecule type" value="Genomic_DNA"/>
</dbReference>
<dbReference type="RefSeq" id="WP_013059005.1">
    <property type="nucleotide sequence ID" value="NC_014019.1"/>
</dbReference>
<dbReference type="SMR" id="P70936"/>
<dbReference type="STRING" id="545693.BMQ_4322"/>
<dbReference type="KEGG" id="bmq:BMQ_4322"/>
<dbReference type="eggNOG" id="COG0547">
    <property type="taxonomic scope" value="Bacteria"/>
</dbReference>
<dbReference type="HOGENOM" id="CLU_034315_2_1_9"/>
<dbReference type="UniPathway" id="UPA00035">
    <property type="reaction ID" value="UER00041"/>
</dbReference>
<dbReference type="Proteomes" id="UP000000935">
    <property type="component" value="Chromosome"/>
</dbReference>
<dbReference type="GO" id="GO:0005829">
    <property type="term" value="C:cytosol"/>
    <property type="evidence" value="ECO:0007669"/>
    <property type="project" value="TreeGrafter"/>
</dbReference>
<dbReference type="GO" id="GO:0004048">
    <property type="term" value="F:anthranilate phosphoribosyltransferase activity"/>
    <property type="evidence" value="ECO:0007669"/>
    <property type="project" value="UniProtKB-UniRule"/>
</dbReference>
<dbReference type="GO" id="GO:0000287">
    <property type="term" value="F:magnesium ion binding"/>
    <property type="evidence" value="ECO:0007669"/>
    <property type="project" value="UniProtKB-UniRule"/>
</dbReference>
<dbReference type="GO" id="GO:0000162">
    <property type="term" value="P:L-tryptophan biosynthetic process"/>
    <property type="evidence" value="ECO:0007669"/>
    <property type="project" value="UniProtKB-UniRule"/>
</dbReference>
<dbReference type="FunFam" id="3.40.1030.10:FF:000002">
    <property type="entry name" value="Anthranilate phosphoribosyltransferase"/>
    <property type="match status" value="1"/>
</dbReference>
<dbReference type="Gene3D" id="3.40.1030.10">
    <property type="entry name" value="Nucleoside phosphorylase/phosphoribosyltransferase catalytic domain"/>
    <property type="match status" value="1"/>
</dbReference>
<dbReference type="Gene3D" id="1.20.970.10">
    <property type="entry name" value="Transferase, Pyrimidine Nucleoside Phosphorylase, Chain C"/>
    <property type="match status" value="1"/>
</dbReference>
<dbReference type="HAMAP" id="MF_00211">
    <property type="entry name" value="TrpD"/>
    <property type="match status" value="1"/>
</dbReference>
<dbReference type="InterPro" id="IPR005940">
    <property type="entry name" value="Anthranilate_Pribosyl_Tfrase"/>
</dbReference>
<dbReference type="InterPro" id="IPR000312">
    <property type="entry name" value="Glycosyl_Trfase_fam3"/>
</dbReference>
<dbReference type="InterPro" id="IPR017459">
    <property type="entry name" value="Glycosyl_Trfase_fam3_N_dom"/>
</dbReference>
<dbReference type="InterPro" id="IPR036320">
    <property type="entry name" value="Glycosyl_Trfase_fam3_N_dom_sf"/>
</dbReference>
<dbReference type="InterPro" id="IPR035902">
    <property type="entry name" value="Nuc_phospho_transferase"/>
</dbReference>
<dbReference type="NCBIfam" id="TIGR01245">
    <property type="entry name" value="trpD"/>
    <property type="match status" value="1"/>
</dbReference>
<dbReference type="PANTHER" id="PTHR43285">
    <property type="entry name" value="ANTHRANILATE PHOSPHORIBOSYLTRANSFERASE"/>
    <property type="match status" value="1"/>
</dbReference>
<dbReference type="PANTHER" id="PTHR43285:SF2">
    <property type="entry name" value="ANTHRANILATE PHOSPHORIBOSYLTRANSFERASE"/>
    <property type="match status" value="1"/>
</dbReference>
<dbReference type="Pfam" id="PF02885">
    <property type="entry name" value="Glycos_trans_3N"/>
    <property type="match status" value="1"/>
</dbReference>
<dbReference type="Pfam" id="PF00591">
    <property type="entry name" value="Glycos_transf_3"/>
    <property type="match status" value="1"/>
</dbReference>
<dbReference type="SUPFAM" id="SSF52418">
    <property type="entry name" value="Nucleoside phosphorylase/phosphoribosyltransferase catalytic domain"/>
    <property type="match status" value="1"/>
</dbReference>
<dbReference type="SUPFAM" id="SSF47648">
    <property type="entry name" value="Nucleoside phosphorylase/phosphoribosyltransferase N-terminal domain"/>
    <property type="match status" value="1"/>
</dbReference>
<evidence type="ECO:0000255" key="1">
    <source>
        <dbReference type="HAMAP-Rule" id="MF_00211"/>
    </source>
</evidence>
<proteinExistence type="inferred from homology"/>
<organism>
    <name type="scientific">Priestia megaterium (strain ATCC 12872 / QMB1551)</name>
    <name type="common">Bacillus megaterium</name>
    <dbReference type="NCBI Taxonomy" id="545693"/>
    <lineage>
        <taxon>Bacteria</taxon>
        <taxon>Bacillati</taxon>
        <taxon>Bacillota</taxon>
        <taxon>Bacilli</taxon>
        <taxon>Bacillales</taxon>
        <taxon>Bacillaceae</taxon>
        <taxon>Priestia</taxon>
    </lineage>
</organism>
<name>TRPD_PRIM1</name>
<gene>
    <name evidence="1" type="primary">trpD</name>
    <name type="ordered locus">BMQ_4322</name>
</gene>